<evidence type="ECO:0000255" key="1">
    <source>
        <dbReference type="HAMAP-Rule" id="MF_00208"/>
    </source>
</evidence>
<feature type="chain" id="PRO_1000012386" description="UDP-N-acetylmuramoyl-L-alanyl-D-glutamate--L-lysine ligase">
    <location>
        <begin position="1"/>
        <end position="481"/>
    </location>
</feature>
<feature type="short sequence motif" description="L-lysine recognition motif">
    <location>
        <begin position="404"/>
        <end position="407"/>
    </location>
</feature>
<feature type="binding site" evidence="1">
    <location>
        <position position="42"/>
    </location>
    <ligand>
        <name>UDP-N-acetyl-alpha-D-muramoyl-L-alanyl-D-glutamate</name>
        <dbReference type="ChEBI" id="CHEBI:83900"/>
    </ligand>
</feature>
<feature type="binding site" evidence="1">
    <location>
        <begin position="118"/>
        <end position="124"/>
    </location>
    <ligand>
        <name>ATP</name>
        <dbReference type="ChEBI" id="CHEBI:30616"/>
    </ligand>
</feature>
<feature type="binding site" evidence="1">
    <location>
        <begin position="160"/>
        <end position="161"/>
    </location>
    <ligand>
        <name>UDP-N-acetyl-alpha-D-muramoyl-L-alanyl-D-glutamate</name>
        <dbReference type="ChEBI" id="CHEBI:83900"/>
    </ligand>
</feature>
<feature type="binding site" evidence="1">
    <location>
        <position position="187"/>
    </location>
    <ligand>
        <name>UDP-N-acetyl-alpha-D-muramoyl-L-alanyl-D-glutamate</name>
        <dbReference type="ChEBI" id="CHEBI:83900"/>
    </ligand>
</feature>
<feature type="binding site" evidence="1">
    <location>
        <position position="195"/>
    </location>
    <ligand>
        <name>UDP-N-acetyl-alpha-D-muramoyl-L-alanyl-D-glutamate</name>
        <dbReference type="ChEBI" id="CHEBI:83900"/>
    </ligand>
</feature>
<feature type="modified residue" description="N6-carboxylysine" evidence="1">
    <location>
        <position position="229"/>
    </location>
</feature>
<gene>
    <name evidence="1" type="primary">murE</name>
    <name type="ordered locus">SPD_1359</name>
</gene>
<name>MURE_STRP2</name>
<reference key="1">
    <citation type="journal article" date="2007" name="J. Bacteriol.">
        <title>Genome sequence of Avery's virulent serotype 2 strain D39 of Streptococcus pneumoniae and comparison with that of unencapsulated laboratory strain R6.</title>
        <authorList>
            <person name="Lanie J.A."/>
            <person name="Ng W.-L."/>
            <person name="Kazmierczak K.M."/>
            <person name="Andrzejewski T.M."/>
            <person name="Davidsen T.M."/>
            <person name="Wayne K.J."/>
            <person name="Tettelin H."/>
            <person name="Glass J.I."/>
            <person name="Winkler M.E."/>
        </authorList>
    </citation>
    <scope>NUCLEOTIDE SEQUENCE [LARGE SCALE GENOMIC DNA]</scope>
    <source>
        <strain>D39 / NCTC 7466</strain>
    </source>
</reference>
<comment type="function">
    <text evidence="1">Catalyzes the addition of L-lysine to the nucleotide precursor UDP-N-acetylmuramoyl-L-alanyl-D-glutamate (UMAG) in the biosynthesis of bacterial cell-wall peptidoglycan.</text>
</comment>
<comment type="catalytic activity">
    <reaction evidence="1">
        <text>UDP-N-acetyl-alpha-D-muramoyl-L-alanyl-D-glutamate + L-lysine + ATP = UDP-N-acetyl-alpha-D-muramoyl-L-alanyl-gamma-D-glutamyl-L-lysine + ADP + phosphate + H(+)</text>
        <dbReference type="Rhea" id="RHEA:17969"/>
        <dbReference type="ChEBI" id="CHEBI:15378"/>
        <dbReference type="ChEBI" id="CHEBI:30616"/>
        <dbReference type="ChEBI" id="CHEBI:32551"/>
        <dbReference type="ChEBI" id="CHEBI:43474"/>
        <dbReference type="ChEBI" id="CHEBI:83900"/>
        <dbReference type="ChEBI" id="CHEBI:83903"/>
        <dbReference type="ChEBI" id="CHEBI:456216"/>
        <dbReference type="EC" id="6.3.2.7"/>
    </reaction>
</comment>
<comment type="pathway">
    <text evidence="1">Cell wall biogenesis; peptidoglycan biosynthesis.</text>
</comment>
<comment type="subcellular location">
    <subcellularLocation>
        <location evidence="1">Cytoplasm</location>
    </subcellularLocation>
</comment>
<comment type="PTM">
    <text evidence="1">Carboxylation is probably crucial for Mg(2+) binding and, consequently, for the gamma-phosphate positioning of ATP.</text>
</comment>
<comment type="similarity">
    <text evidence="1">Belongs to the MurCDEF family. MurE subfamily.</text>
</comment>
<keyword id="KW-0067">ATP-binding</keyword>
<keyword id="KW-0131">Cell cycle</keyword>
<keyword id="KW-0132">Cell division</keyword>
<keyword id="KW-0133">Cell shape</keyword>
<keyword id="KW-0961">Cell wall biogenesis/degradation</keyword>
<keyword id="KW-0963">Cytoplasm</keyword>
<keyword id="KW-0436">Ligase</keyword>
<keyword id="KW-0547">Nucleotide-binding</keyword>
<keyword id="KW-0573">Peptidoglycan synthesis</keyword>
<keyword id="KW-1185">Reference proteome</keyword>
<protein>
    <recommendedName>
        <fullName evidence="1">UDP-N-acetylmuramoyl-L-alanyl-D-glutamate--L-lysine ligase</fullName>
        <ecNumber evidence="1">6.3.2.7</ecNumber>
    </recommendedName>
    <alternativeName>
        <fullName evidence="1">L-lysine-adding enzyme</fullName>
    </alternativeName>
    <alternativeName>
        <fullName evidence="1">UDP-MurNAc-L-Ala-D-Glu:L-Lys ligase</fullName>
    </alternativeName>
    <alternativeName>
        <fullName evidence="1">UDP-MurNAc-tripeptide synthetase</fullName>
    </alternativeName>
    <alternativeName>
        <fullName evidence="1">UDP-N-acetylmuramyl-tripeptide synthetase</fullName>
    </alternativeName>
</protein>
<proteinExistence type="inferred from homology"/>
<organism>
    <name type="scientific">Streptococcus pneumoniae serotype 2 (strain D39 / NCTC 7466)</name>
    <dbReference type="NCBI Taxonomy" id="373153"/>
    <lineage>
        <taxon>Bacteria</taxon>
        <taxon>Bacillati</taxon>
        <taxon>Bacillota</taxon>
        <taxon>Bacilli</taxon>
        <taxon>Lactobacillales</taxon>
        <taxon>Streptococcaceae</taxon>
        <taxon>Streptococcus</taxon>
    </lineage>
</organism>
<sequence length="481" mass="53828">MIKIETVLDILKKDGLFREIIDQGHYHYNYSKVIFDSISYDSRKVTEDTLFFAKGAAFKKEYLLSAITQGLAWYVAEKDYEVDIPVIIVNDIKKAMSLIAMEFYGNPQEKLKLLAFTGTKGKTTATYFAYNILSQGHRPAMLSTMNTTLDGETFFKSALTTPESIDLFDMMNQAVQNDRTHLIMEVSSQAYLVHRVYGLTFDVGVFLNITPDHIGPIEHPSFEDYFYHKRLLMENSRAVIINSDMDHFSVLKEQVEDQDHDFYGSQFDNQIENSKAFSFSATGKLAGDYDIQLIGNFNQENAVAAGLACLRLGASLEDIKKGIAATRVPGRMEVLTQKNGAKVFIDYAHNGDSLKKLINVVETHQTGKIALVLGSTGNKGESRRKDFGLLLNQHPEIQVFLTADDPNYEDPMAIADEISSYINHPVEKIADRQEAIKAAMAITNHELDAVIIAGKGADCYQIIQGKKESYPGDTAVAENYL</sequence>
<accession>Q04JL8</accession>
<dbReference type="EC" id="6.3.2.7" evidence="1"/>
<dbReference type="EMBL" id="CP000410">
    <property type="protein sequence ID" value="ABJ54578.1"/>
    <property type="molecule type" value="Genomic_DNA"/>
</dbReference>
<dbReference type="RefSeq" id="WP_000590294.1">
    <property type="nucleotide sequence ID" value="NZ_JAMLJR010000008.1"/>
</dbReference>
<dbReference type="SMR" id="Q04JL8"/>
<dbReference type="PaxDb" id="373153-SPD_1359"/>
<dbReference type="KEGG" id="spd:SPD_1359"/>
<dbReference type="eggNOG" id="COG0769">
    <property type="taxonomic scope" value="Bacteria"/>
</dbReference>
<dbReference type="HOGENOM" id="CLU_022291_4_2_9"/>
<dbReference type="BioCyc" id="SPNE373153:G1G6V-1465-MONOMER"/>
<dbReference type="UniPathway" id="UPA00219"/>
<dbReference type="Proteomes" id="UP000001452">
    <property type="component" value="Chromosome"/>
</dbReference>
<dbReference type="GO" id="GO:0005737">
    <property type="term" value="C:cytoplasm"/>
    <property type="evidence" value="ECO:0007669"/>
    <property type="project" value="UniProtKB-SubCell"/>
</dbReference>
<dbReference type="GO" id="GO:0005524">
    <property type="term" value="F:ATP binding"/>
    <property type="evidence" value="ECO:0007669"/>
    <property type="project" value="UniProtKB-UniRule"/>
</dbReference>
<dbReference type="GO" id="GO:0000287">
    <property type="term" value="F:magnesium ion binding"/>
    <property type="evidence" value="ECO:0007669"/>
    <property type="project" value="UniProtKB-UniRule"/>
</dbReference>
<dbReference type="GO" id="GO:0047482">
    <property type="term" value="F:UDP-N-acetylmuramoyl-L-alanyl-D-glutamate-L-lysine ligase activity"/>
    <property type="evidence" value="ECO:0007669"/>
    <property type="project" value="UniProtKB-UniRule"/>
</dbReference>
<dbReference type="GO" id="GO:0051301">
    <property type="term" value="P:cell division"/>
    <property type="evidence" value="ECO:0007669"/>
    <property type="project" value="UniProtKB-KW"/>
</dbReference>
<dbReference type="GO" id="GO:0071555">
    <property type="term" value="P:cell wall organization"/>
    <property type="evidence" value="ECO:0007669"/>
    <property type="project" value="UniProtKB-KW"/>
</dbReference>
<dbReference type="GO" id="GO:0009252">
    <property type="term" value="P:peptidoglycan biosynthetic process"/>
    <property type="evidence" value="ECO:0007669"/>
    <property type="project" value="UniProtKB-UniRule"/>
</dbReference>
<dbReference type="GO" id="GO:0008360">
    <property type="term" value="P:regulation of cell shape"/>
    <property type="evidence" value="ECO:0007669"/>
    <property type="project" value="UniProtKB-KW"/>
</dbReference>
<dbReference type="Gene3D" id="3.90.190.20">
    <property type="entry name" value="Mur ligase, C-terminal domain"/>
    <property type="match status" value="1"/>
</dbReference>
<dbReference type="Gene3D" id="3.40.1190.10">
    <property type="entry name" value="Mur-like, catalytic domain"/>
    <property type="match status" value="1"/>
</dbReference>
<dbReference type="Gene3D" id="3.40.1390.10">
    <property type="entry name" value="MurE/MurF, N-terminal domain"/>
    <property type="match status" value="1"/>
</dbReference>
<dbReference type="HAMAP" id="MF_00208">
    <property type="entry name" value="MurE"/>
    <property type="match status" value="1"/>
</dbReference>
<dbReference type="InterPro" id="IPR036565">
    <property type="entry name" value="Mur-like_cat_sf"/>
</dbReference>
<dbReference type="InterPro" id="IPR004101">
    <property type="entry name" value="Mur_ligase_C"/>
</dbReference>
<dbReference type="InterPro" id="IPR036615">
    <property type="entry name" value="Mur_ligase_C_dom_sf"/>
</dbReference>
<dbReference type="InterPro" id="IPR013221">
    <property type="entry name" value="Mur_ligase_cen"/>
</dbReference>
<dbReference type="InterPro" id="IPR035911">
    <property type="entry name" value="MurE/MurF_N"/>
</dbReference>
<dbReference type="InterPro" id="IPR005761">
    <property type="entry name" value="UDP-N-AcMur-Glu-dNH2Pim_ligase"/>
</dbReference>
<dbReference type="NCBIfam" id="TIGR01085">
    <property type="entry name" value="murE"/>
    <property type="match status" value="1"/>
</dbReference>
<dbReference type="NCBIfam" id="NF010628">
    <property type="entry name" value="PRK14022.1"/>
    <property type="match status" value="1"/>
</dbReference>
<dbReference type="PANTHER" id="PTHR23135">
    <property type="entry name" value="MUR LIGASE FAMILY MEMBER"/>
    <property type="match status" value="1"/>
</dbReference>
<dbReference type="PANTHER" id="PTHR23135:SF4">
    <property type="entry name" value="UDP-N-ACETYLMURAMOYL-L-ALANYL-D-GLUTAMATE--2,6-DIAMINOPIMELATE LIGASE MURE HOMOLOG, CHLOROPLASTIC"/>
    <property type="match status" value="1"/>
</dbReference>
<dbReference type="Pfam" id="PF02875">
    <property type="entry name" value="Mur_ligase_C"/>
    <property type="match status" value="1"/>
</dbReference>
<dbReference type="Pfam" id="PF08245">
    <property type="entry name" value="Mur_ligase_M"/>
    <property type="match status" value="1"/>
</dbReference>
<dbReference type="SUPFAM" id="SSF53623">
    <property type="entry name" value="MurD-like peptide ligases, catalytic domain"/>
    <property type="match status" value="1"/>
</dbReference>
<dbReference type="SUPFAM" id="SSF53244">
    <property type="entry name" value="MurD-like peptide ligases, peptide-binding domain"/>
    <property type="match status" value="1"/>
</dbReference>
<dbReference type="SUPFAM" id="SSF63418">
    <property type="entry name" value="MurE/MurF N-terminal domain"/>
    <property type="match status" value="1"/>
</dbReference>